<reference key="1">
    <citation type="journal article" date="2006" name="PLoS Genet.">
        <title>Secrets of soil survival revealed by the genome sequence of Arthrobacter aurescens TC1.</title>
        <authorList>
            <person name="Mongodin E.F."/>
            <person name="Shapir N."/>
            <person name="Daugherty S.C."/>
            <person name="DeBoy R.T."/>
            <person name="Emerson J.B."/>
            <person name="Shvartzbeyn A."/>
            <person name="Radune D."/>
            <person name="Vamathevan J."/>
            <person name="Riggs F."/>
            <person name="Grinberg V."/>
            <person name="Khouri H.M."/>
            <person name="Wackett L.P."/>
            <person name="Nelson K.E."/>
            <person name="Sadowsky M.J."/>
        </authorList>
    </citation>
    <scope>NUCLEOTIDE SEQUENCE [LARGE SCALE GENOMIC DNA]</scope>
    <source>
        <strain>TC1</strain>
    </source>
</reference>
<comment type="function">
    <text evidence="1">Binds to 23S rRNA. Forms part of two intersubunit bridges in the 70S ribosome.</text>
</comment>
<comment type="subunit">
    <text evidence="1">Part of the 50S ribosomal subunit. Forms a cluster with proteins L3 and L19. In the 70S ribosome, L14 and L19 interact and together make contacts with the 16S rRNA in bridges B5 and B8.</text>
</comment>
<comment type="similarity">
    <text evidence="1">Belongs to the universal ribosomal protein uL14 family.</text>
</comment>
<dbReference type="EMBL" id="CP000474">
    <property type="protein sequence ID" value="ABM08916.1"/>
    <property type="molecule type" value="Genomic_DNA"/>
</dbReference>
<dbReference type="RefSeq" id="WP_003803789.1">
    <property type="nucleotide sequence ID" value="NC_008711.1"/>
</dbReference>
<dbReference type="SMR" id="A1R8T5"/>
<dbReference type="STRING" id="290340.AAur_2938"/>
<dbReference type="GeneID" id="97301782"/>
<dbReference type="KEGG" id="aau:AAur_2938"/>
<dbReference type="eggNOG" id="COG0093">
    <property type="taxonomic scope" value="Bacteria"/>
</dbReference>
<dbReference type="HOGENOM" id="CLU_095071_2_1_11"/>
<dbReference type="OrthoDB" id="9806379at2"/>
<dbReference type="Proteomes" id="UP000000637">
    <property type="component" value="Chromosome"/>
</dbReference>
<dbReference type="GO" id="GO:0022625">
    <property type="term" value="C:cytosolic large ribosomal subunit"/>
    <property type="evidence" value="ECO:0007669"/>
    <property type="project" value="TreeGrafter"/>
</dbReference>
<dbReference type="GO" id="GO:0070180">
    <property type="term" value="F:large ribosomal subunit rRNA binding"/>
    <property type="evidence" value="ECO:0007669"/>
    <property type="project" value="TreeGrafter"/>
</dbReference>
<dbReference type="GO" id="GO:0003735">
    <property type="term" value="F:structural constituent of ribosome"/>
    <property type="evidence" value="ECO:0007669"/>
    <property type="project" value="InterPro"/>
</dbReference>
<dbReference type="GO" id="GO:0006412">
    <property type="term" value="P:translation"/>
    <property type="evidence" value="ECO:0007669"/>
    <property type="project" value="UniProtKB-UniRule"/>
</dbReference>
<dbReference type="CDD" id="cd00337">
    <property type="entry name" value="Ribosomal_uL14"/>
    <property type="match status" value="1"/>
</dbReference>
<dbReference type="FunFam" id="2.40.150.20:FF:000001">
    <property type="entry name" value="50S ribosomal protein L14"/>
    <property type="match status" value="1"/>
</dbReference>
<dbReference type="Gene3D" id="2.40.150.20">
    <property type="entry name" value="Ribosomal protein L14"/>
    <property type="match status" value="1"/>
</dbReference>
<dbReference type="HAMAP" id="MF_01367">
    <property type="entry name" value="Ribosomal_uL14"/>
    <property type="match status" value="1"/>
</dbReference>
<dbReference type="InterPro" id="IPR000218">
    <property type="entry name" value="Ribosomal_uL14"/>
</dbReference>
<dbReference type="InterPro" id="IPR005745">
    <property type="entry name" value="Ribosomal_uL14_bac-type"/>
</dbReference>
<dbReference type="InterPro" id="IPR019972">
    <property type="entry name" value="Ribosomal_uL14_CS"/>
</dbReference>
<dbReference type="InterPro" id="IPR036853">
    <property type="entry name" value="Ribosomal_uL14_sf"/>
</dbReference>
<dbReference type="NCBIfam" id="TIGR01067">
    <property type="entry name" value="rplN_bact"/>
    <property type="match status" value="1"/>
</dbReference>
<dbReference type="PANTHER" id="PTHR11761">
    <property type="entry name" value="50S/60S RIBOSOMAL PROTEIN L14/L23"/>
    <property type="match status" value="1"/>
</dbReference>
<dbReference type="PANTHER" id="PTHR11761:SF3">
    <property type="entry name" value="LARGE RIBOSOMAL SUBUNIT PROTEIN UL14M"/>
    <property type="match status" value="1"/>
</dbReference>
<dbReference type="Pfam" id="PF00238">
    <property type="entry name" value="Ribosomal_L14"/>
    <property type="match status" value="1"/>
</dbReference>
<dbReference type="SMART" id="SM01374">
    <property type="entry name" value="Ribosomal_L14"/>
    <property type="match status" value="1"/>
</dbReference>
<dbReference type="SUPFAM" id="SSF50193">
    <property type="entry name" value="Ribosomal protein L14"/>
    <property type="match status" value="1"/>
</dbReference>
<dbReference type="PROSITE" id="PS00049">
    <property type="entry name" value="RIBOSOMAL_L14"/>
    <property type="match status" value="1"/>
</dbReference>
<organism>
    <name type="scientific">Paenarthrobacter aurescens (strain TC1)</name>
    <dbReference type="NCBI Taxonomy" id="290340"/>
    <lineage>
        <taxon>Bacteria</taxon>
        <taxon>Bacillati</taxon>
        <taxon>Actinomycetota</taxon>
        <taxon>Actinomycetes</taxon>
        <taxon>Micrococcales</taxon>
        <taxon>Micrococcaceae</taxon>
        <taxon>Paenarthrobacter</taxon>
    </lineage>
</organism>
<gene>
    <name evidence="1" type="primary">rplN</name>
    <name type="ordered locus">AAur_2938</name>
</gene>
<protein>
    <recommendedName>
        <fullName evidence="1">Large ribosomal subunit protein uL14</fullName>
    </recommendedName>
    <alternativeName>
        <fullName evidence="2">50S ribosomal protein L14</fullName>
    </alternativeName>
</protein>
<sequence>MIQQESRLKVADNTGAKEILTIRVLGGSGRRYAGIGDVIVATVKDAIPGGNVKKGDVVKAVIVRTKKERRRADGSYIKFDENAAVILKNDGDPRGTRIFGPVGRELRDKKFMKIVSLAPEVL</sequence>
<feature type="chain" id="PRO_1000055505" description="Large ribosomal subunit protein uL14">
    <location>
        <begin position="1"/>
        <end position="122"/>
    </location>
</feature>
<keyword id="KW-0687">Ribonucleoprotein</keyword>
<keyword id="KW-0689">Ribosomal protein</keyword>
<keyword id="KW-0694">RNA-binding</keyword>
<keyword id="KW-0699">rRNA-binding</keyword>
<proteinExistence type="inferred from homology"/>
<name>RL14_PAEAT</name>
<accession>A1R8T5</accession>
<evidence type="ECO:0000255" key="1">
    <source>
        <dbReference type="HAMAP-Rule" id="MF_01367"/>
    </source>
</evidence>
<evidence type="ECO:0000305" key="2"/>